<keyword id="KW-1185">Reference proteome</keyword>
<evidence type="ECO:0000255" key="1">
    <source>
        <dbReference type="HAMAP-Rule" id="MF_00489"/>
    </source>
</evidence>
<accession>B7JBE5</accession>
<proteinExistence type="inferred from homology"/>
<name>Y3267_ACIF2</name>
<reference key="1">
    <citation type="journal article" date="2008" name="BMC Genomics">
        <title>Acidithiobacillus ferrooxidans metabolism: from genome sequence to industrial applications.</title>
        <authorList>
            <person name="Valdes J."/>
            <person name="Pedroso I."/>
            <person name="Quatrini R."/>
            <person name="Dodson R.J."/>
            <person name="Tettelin H."/>
            <person name="Blake R. II"/>
            <person name="Eisen J.A."/>
            <person name="Holmes D.S."/>
        </authorList>
    </citation>
    <scope>NUCLEOTIDE SEQUENCE [LARGE SCALE GENOMIC DNA]</scope>
    <source>
        <strain>ATCC 23270 / DSM 14882 / CIP 104768 / NCIMB 8455</strain>
    </source>
</reference>
<protein>
    <recommendedName>
        <fullName evidence="1">UPF0178 protein AFE_3267</fullName>
    </recommendedName>
</protein>
<dbReference type="EMBL" id="CP001219">
    <property type="protein sequence ID" value="ACK78388.1"/>
    <property type="molecule type" value="Genomic_DNA"/>
</dbReference>
<dbReference type="RefSeq" id="WP_012537685.1">
    <property type="nucleotide sequence ID" value="NC_011761.1"/>
</dbReference>
<dbReference type="STRING" id="243159.AFE_3267"/>
<dbReference type="PaxDb" id="243159-AFE_3267"/>
<dbReference type="GeneID" id="65282245"/>
<dbReference type="KEGG" id="afr:AFE_3267"/>
<dbReference type="eggNOG" id="COG1671">
    <property type="taxonomic scope" value="Bacteria"/>
</dbReference>
<dbReference type="HOGENOM" id="CLU_106619_2_1_6"/>
<dbReference type="Proteomes" id="UP000001362">
    <property type="component" value="Chromosome"/>
</dbReference>
<dbReference type="CDD" id="cd18720">
    <property type="entry name" value="PIN_YqxD-like"/>
    <property type="match status" value="1"/>
</dbReference>
<dbReference type="HAMAP" id="MF_00489">
    <property type="entry name" value="UPF0178"/>
    <property type="match status" value="1"/>
</dbReference>
<dbReference type="InterPro" id="IPR003791">
    <property type="entry name" value="UPF0178"/>
</dbReference>
<dbReference type="NCBIfam" id="NF001095">
    <property type="entry name" value="PRK00124.1"/>
    <property type="match status" value="1"/>
</dbReference>
<dbReference type="PANTHER" id="PTHR35146">
    <property type="entry name" value="UPF0178 PROTEIN YAII"/>
    <property type="match status" value="1"/>
</dbReference>
<dbReference type="PANTHER" id="PTHR35146:SF1">
    <property type="entry name" value="UPF0178 PROTEIN YAII"/>
    <property type="match status" value="1"/>
</dbReference>
<dbReference type="Pfam" id="PF02639">
    <property type="entry name" value="DUF188"/>
    <property type="match status" value="1"/>
</dbReference>
<feature type="chain" id="PRO_1000126169" description="UPF0178 protein AFE_3267">
    <location>
        <begin position="1"/>
        <end position="147"/>
    </location>
</feature>
<sequence>MHIWVDADACPNVIKDILYRASDRLKLPLTLVANQALRVHRSAYIRTVVVPRGFDVADEEIVRHIVAGDLVITADIPLAAAVLEKNSHALSPRGERYSPETIHERLRIRDMMEQLRDSGVRTGGPAALSQADRQAFANALDQLLVRA</sequence>
<comment type="similarity">
    <text evidence="1">Belongs to the UPF0178 family.</text>
</comment>
<organism>
    <name type="scientific">Acidithiobacillus ferrooxidans (strain ATCC 23270 / DSM 14882 / CIP 104768 / NCIMB 8455)</name>
    <name type="common">Ferrobacillus ferrooxidans (strain ATCC 23270)</name>
    <dbReference type="NCBI Taxonomy" id="243159"/>
    <lineage>
        <taxon>Bacteria</taxon>
        <taxon>Pseudomonadati</taxon>
        <taxon>Pseudomonadota</taxon>
        <taxon>Acidithiobacillia</taxon>
        <taxon>Acidithiobacillales</taxon>
        <taxon>Acidithiobacillaceae</taxon>
        <taxon>Acidithiobacillus</taxon>
    </lineage>
</organism>
<gene>
    <name type="ordered locus">AFE_3267</name>
</gene>